<protein>
    <recommendedName>
        <fullName evidence="1">Putative membrane protein insertion efficiency factor</fullName>
    </recommendedName>
</protein>
<reference key="1">
    <citation type="submission" date="2006-03" db="EMBL/GenBank/DDBJ databases">
        <title>Complete sequence of Rhodopseudomonas palustris BisB18.</title>
        <authorList>
            <consortium name="US DOE Joint Genome Institute"/>
            <person name="Copeland A."/>
            <person name="Lucas S."/>
            <person name="Lapidus A."/>
            <person name="Barry K."/>
            <person name="Detter J.C."/>
            <person name="Glavina del Rio T."/>
            <person name="Hammon N."/>
            <person name="Israni S."/>
            <person name="Dalin E."/>
            <person name="Tice H."/>
            <person name="Pitluck S."/>
            <person name="Chain P."/>
            <person name="Malfatti S."/>
            <person name="Shin M."/>
            <person name="Vergez L."/>
            <person name="Schmutz J."/>
            <person name="Larimer F."/>
            <person name="Land M."/>
            <person name="Hauser L."/>
            <person name="Pelletier D.A."/>
            <person name="Kyrpides N."/>
            <person name="Anderson I."/>
            <person name="Oda Y."/>
            <person name="Harwood C.S."/>
            <person name="Richardson P."/>
        </authorList>
    </citation>
    <scope>NUCLEOTIDE SEQUENCE [LARGE SCALE GENOMIC DNA]</scope>
    <source>
        <strain>BisB18</strain>
    </source>
</reference>
<proteinExistence type="inferred from homology"/>
<comment type="function">
    <text evidence="1">Could be involved in insertion of integral membrane proteins into the membrane.</text>
</comment>
<comment type="subcellular location">
    <subcellularLocation>
        <location evidence="1">Cell inner membrane</location>
        <topology evidence="1">Peripheral membrane protein</topology>
        <orientation evidence="1">Cytoplasmic side</orientation>
    </subcellularLocation>
</comment>
<comment type="similarity">
    <text evidence="1">Belongs to the UPF0161 family.</text>
</comment>
<gene>
    <name type="ordered locus">RPC_3117</name>
</gene>
<organism>
    <name type="scientific">Rhodopseudomonas palustris (strain BisB18)</name>
    <dbReference type="NCBI Taxonomy" id="316056"/>
    <lineage>
        <taxon>Bacteria</taxon>
        <taxon>Pseudomonadati</taxon>
        <taxon>Pseudomonadota</taxon>
        <taxon>Alphaproteobacteria</taxon>
        <taxon>Hyphomicrobiales</taxon>
        <taxon>Nitrobacteraceae</taxon>
        <taxon>Rhodopseudomonas</taxon>
    </lineage>
</organism>
<accession>Q212M7</accession>
<dbReference type="EMBL" id="CP000301">
    <property type="protein sequence ID" value="ABD88659.1"/>
    <property type="molecule type" value="Genomic_DNA"/>
</dbReference>
<dbReference type="STRING" id="316056.RPC_3117"/>
<dbReference type="KEGG" id="rpc:RPC_3117"/>
<dbReference type="eggNOG" id="COG0759">
    <property type="taxonomic scope" value="Bacteria"/>
</dbReference>
<dbReference type="HOGENOM" id="CLU_144811_0_0_5"/>
<dbReference type="OrthoDB" id="9801753at2"/>
<dbReference type="GO" id="GO:0005886">
    <property type="term" value="C:plasma membrane"/>
    <property type="evidence" value="ECO:0007669"/>
    <property type="project" value="UniProtKB-SubCell"/>
</dbReference>
<dbReference type="HAMAP" id="MF_00386">
    <property type="entry name" value="UPF0161_YidD"/>
    <property type="match status" value="1"/>
</dbReference>
<dbReference type="InterPro" id="IPR002696">
    <property type="entry name" value="Membr_insert_effic_factor_YidD"/>
</dbReference>
<dbReference type="NCBIfam" id="TIGR00278">
    <property type="entry name" value="membrane protein insertion efficiency factor YidD"/>
    <property type="match status" value="1"/>
</dbReference>
<dbReference type="PANTHER" id="PTHR33383">
    <property type="entry name" value="MEMBRANE PROTEIN INSERTION EFFICIENCY FACTOR-RELATED"/>
    <property type="match status" value="1"/>
</dbReference>
<dbReference type="PANTHER" id="PTHR33383:SF1">
    <property type="entry name" value="MEMBRANE PROTEIN INSERTION EFFICIENCY FACTOR-RELATED"/>
    <property type="match status" value="1"/>
</dbReference>
<dbReference type="Pfam" id="PF01809">
    <property type="entry name" value="YidD"/>
    <property type="match status" value="1"/>
</dbReference>
<dbReference type="SMART" id="SM01234">
    <property type="entry name" value="Haemolytic"/>
    <property type="match status" value="1"/>
</dbReference>
<feature type="chain" id="PRO_0000253155" description="Putative membrane protein insertion efficiency factor">
    <location>
        <begin position="1"/>
        <end position="109"/>
    </location>
</feature>
<evidence type="ECO:0000255" key="1">
    <source>
        <dbReference type="HAMAP-Rule" id="MF_00386"/>
    </source>
</evidence>
<keyword id="KW-0997">Cell inner membrane</keyword>
<keyword id="KW-1003">Cell membrane</keyword>
<keyword id="KW-0472">Membrane</keyword>
<sequence length="109" mass="12435">MKLAIDCPDCRKMILALPRRAGRGAIWLYRHSLSPLVGYHCRHLPTCSSYGDEAIERFGLWAGGWMTLARLLRCQPWGTHGIDNVPLTAPAGARWYLPWRYARWRGVNG</sequence>
<name>YIDD_RHOPB</name>